<dbReference type="EMBL" id="AAFI02000100">
    <property type="protein sequence ID" value="EAL63750.1"/>
    <property type="molecule type" value="Genomic_DNA"/>
</dbReference>
<dbReference type="RefSeq" id="XP_637267.1">
    <property type="nucleotide sequence ID" value="XM_632175.1"/>
</dbReference>
<dbReference type="SMR" id="Q54KF6"/>
<dbReference type="GlyGen" id="Q54KF6">
    <property type="glycosylation" value="5 sites"/>
</dbReference>
<dbReference type="PaxDb" id="44689-DDB0234000"/>
<dbReference type="EnsemblProtists" id="EAL63750">
    <property type="protein sequence ID" value="EAL63750"/>
    <property type="gene ID" value="DDB_G0287365"/>
</dbReference>
<dbReference type="GeneID" id="8626098"/>
<dbReference type="KEGG" id="ddi:DDB_G0287365"/>
<dbReference type="dictyBase" id="DDB_G0287365"/>
<dbReference type="VEuPathDB" id="AmoebaDB:DDB_G0287365"/>
<dbReference type="eggNOG" id="ENOG502QT0K">
    <property type="taxonomic scope" value="Eukaryota"/>
</dbReference>
<dbReference type="HOGENOM" id="CLU_005606_0_0_1"/>
<dbReference type="InParanoid" id="Q54KF6"/>
<dbReference type="OMA" id="DYGCPRA"/>
<dbReference type="PhylomeDB" id="Q54KF6"/>
<dbReference type="Reactome" id="R-DDI-2142850">
    <property type="pathway name" value="Hyaluronan biosynthesis and export"/>
</dbReference>
<dbReference type="PRO" id="PR:Q54KF6"/>
<dbReference type="Proteomes" id="UP000002195">
    <property type="component" value="Chromosome 5"/>
</dbReference>
<dbReference type="GO" id="GO:0016798">
    <property type="term" value="F:hydrolase activity, acting on glycosyl bonds"/>
    <property type="evidence" value="ECO:0007669"/>
    <property type="project" value="UniProtKB-KW"/>
</dbReference>
<dbReference type="InterPro" id="IPR052252">
    <property type="entry name" value="CEMIP/CEMIP2"/>
</dbReference>
<dbReference type="InterPro" id="IPR055401">
    <property type="entry name" value="CEMIP_beta-hel_dom"/>
</dbReference>
<dbReference type="InterPro" id="IPR055400">
    <property type="entry name" value="CEMIP_X"/>
</dbReference>
<dbReference type="InterPro" id="IPR019316">
    <property type="entry name" value="G8_domain"/>
</dbReference>
<dbReference type="PANTHER" id="PTHR15535:SF29">
    <property type="entry name" value="PROTEIN DDB_G0287365"/>
    <property type="match status" value="1"/>
</dbReference>
<dbReference type="PANTHER" id="PTHR15535">
    <property type="entry name" value="TRANSMEMBRANE PROTEIN 2-RELATED"/>
    <property type="match status" value="1"/>
</dbReference>
<dbReference type="Pfam" id="PF24606">
    <property type="entry name" value="CEMIP_beta-hel"/>
    <property type="match status" value="1"/>
</dbReference>
<dbReference type="Pfam" id="PF24605">
    <property type="entry name" value="CEMIP_X"/>
    <property type="match status" value="1"/>
</dbReference>
<dbReference type="Pfam" id="PF10162">
    <property type="entry name" value="G8"/>
    <property type="match status" value="1"/>
</dbReference>
<dbReference type="SMART" id="SM01225">
    <property type="entry name" value="G8"/>
    <property type="match status" value="1"/>
</dbReference>
<dbReference type="PROSITE" id="PS51484">
    <property type="entry name" value="G8"/>
    <property type="match status" value="1"/>
</dbReference>
<reference key="1">
    <citation type="journal article" date="2005" name="Nature">
        <title>The genome of the social amoeba Dictyostelium discoideum.</title>
        <authorList>
            <person name="Eichinger L."/>
            <person name="Pachebat J.A."/>
            <person name="Gloeckner G."/>
            <person name="Rajandream M.A."/>
            <person name="Sucgang R."/>
            <person name="Berriman M."/>
            <person name="Song J."/>
            <person name="Olsen R."/>
            <person name="Szafranski K."/>
            <person name="Xu Q."/>
            <person name="Tunggal B."/>
            <person name="Kummerfeld S."/>
            <person name="Madera M."/>
            <person name="Konfortov B.A."/>
            <person name="Rivero F."/>
            <person name="Bankier A.T."/>
            <person name="Lehmann R."/>
            <person name="Hamlin N."/>
            <person name="Davies R."/>
            <person name="Gaudet P."/>
            <person name="Fey P."/>
            <person name="Pilcher K."/>
            <person name="Chen G."/>
            <person name="Saunders D."/>
            <person name="Sodergren E.J."/>
            <person name="Davis P."/>
            <person name="Kerhornou A."/>
            <person name="Nie X."/>
            <person name="Hall N."/>
            <person name="Anjard C."/>
            <person name="Hemphill L."/>
            <person name="Bason N."/>
            <person name="Farbrother P."/>
            <person name="Desany B."/>
            <person name="Just E."/>
            <person name="Morio T."/>
            <person name="Rost R."/>
            <person name="Churcher C.M."/>
            <person name="Cooper J."/>
            <person name="Haydock S."/>
            <person name="van Driessche N."/>
            <person name="Cronin A."/>
            <person name="Goodhead I."/>
            <person name="Muzny D.M."/>
            <person name="Mourier T."/>
            <person name="Pain A."/>
            <person name="Lu M."/>
            <person name="Harper D."/>
            <person name="Lindsay R."/>
            <person name="Hauser H."/>
            <person name="James K.D."/>
            <person name="Quiles M."/>
            <person name="Madan Babu M."/>
            <person name="Saito T."/>
            <person name="Buchrieser C."/>
            <person name="Wardroper A."/>
            <person name="Felder M."/>
            <person name="Thangavelu M."/>
            <person name="Johnson D."/>
            <person name="Knights A."/>
            <person name="Loulseged H."/>
            <person name="Mungall K.L."/>
            <person name="Oliver K."/>
            <person name="Price C."/>
            <person name="Quail M.A."/>
            <person name="Urushihara H."/>
            <person name="Hernandez J."/>
            <person name="Rabbinowitsch E."/>
            <person name="Steffen D."/>
            <person name="Sanders M."/>
            <person name="Ma J."/>
            <person name="Kohara Y."/>
            <person name="Sharp S."/>
            <person name="Simmonds M.N."/>
            <person name="Spiegler S."/>
            <person name="Tivey A."/>
            <person name="Sugano S."/>
            <person name="White B."/>
            <person name="Walker D."/>
            <person name="Woodward J.R."/>
            <person name="Winckler T."/>
            <person name="Tanaka Y."/>
            <person name="Shaulsky G."/>
            <person name="Schleicher M."/>
            <person name="Weinstock G.M."/>
            <person name="Rosenthal A."/>
            <person name="Cox E.C."/>
            <person name="Chisholm R.L."/>
            <person name="Gibbs R.A."/>
            <person name="Loomis W.F."/>
            <person name="Platzer M."/>
            <person name="Kay R.R."/>
            <person name="Williams J.G."/>
            <person name="Dear P.H."/>
            <person name="Noegel A.A."/>
            <person name="Barrell B.G."/>
            <person name="Kuspa A."/>
        </authorList>
    </citation>
    <scope>NUCLEOTIDE SEQUENCE [LARGE SCALE GENOMIC DNA]</scope>
    <source>
        <strain>AX4</strain>
    </source>
</reference>
<evidence type="ECO:0000255" key="1"/>
<evidence type="ECO:0000255" key="2">
    <source>
        <dbReference type="PROSITE-ProRule" id="PRU00817"/>
    </source>
</evidence>
<evidence type="ECO:0000305" key="3"/>
<proteinExistence type="inferred from homology"/>
<gene>
    <name type="ORF">DDB_G0287365</name>
</gene>
<sequence length="1099" mass="125420">MMSFNLILILIIFLILIQNYVIDGNDNFNLIKCPDEIPNLKKWSNYKSWKKLKLPIKGESINITTPILMDIKPPDLDVIRIFDKGMLVWKHINNLELRVKAILIYDGGQLIIGSEQCKFKYKATITLIGDSIYTEINQTINGNEYGQKVIGIDNGGTIELHSEVTKTTWTKLISTISPSTFNSNKNILTLLDNVNDWPIGSEILITSTDYDMEQSETNFIVKCSTCKTNQIKLKNPIKYLHWGSITKGVDERAEVALLTRNIKIQGQVGKTCVNNKLVCDFFPFDSFGAHIMIRKGFVNAHFFGIELFNVGQSHVVSRYPIHFHLCDRVDELGGYENPAYIKHCSVHKSFSRCYVVHSTDGLLIHDNIGFDSIGHCYMLCDGIEMDNVFSHNLGAVTRYGLLFPHDRSCDMCSRIQPNDFNGNPTQCTECNAVSTFWISNPWNTLIDNVASGSDSTGIWYLFSDYPSGLSHERGIKYNIKPYLIPVKKFYNNNVHSCTNGIQIDGGVKLTPPSKTQPQQLNSMINARYKPRSNPKNPNSKPSPSIFNGATIYKNKWRGCWARGGFLFMKNFKIADNAIGFTFASEGTIPGDQNVGQYIYKSLIVGESDNIGQQSNNIPIVNGRTNPYGENGLMPIRGFEIYDGTISLDSMVFSEFKSLPPLFRNSSAIGFLRFNDWQSSSETTIKNIKYINVDKEIHFEQSLMDGDKISTLRDLDGSTTKLSNSILVRNLLFYSTNNCYYKKPWDALICKEDTRQIYICNDDTNSTNYLSLSSSVVAIRDNIENQKIEQIGLPNHSPRNRFQFLVFKNHHYDFHFPNHPTPPILRVQPMNWKQSEKFTFGICIGISKGINLKVLKTVNGTYGNSNFVEELYPTFSMNLISESTYYFNEITSMLYIMYYQYNSKDHLNYCPEYGCEELVIKISGKNSGRVTGDCQSLAYGSSFTLFDEVVNRKFENSFQMDKSIIHNSEYAYRGNAYLPYHPTSKSQIQFKCNHCIPSVGIKYFEIWVNGNRNSNQRISIQLFYSINSNQLKSQPFAIDKNYFKKNSWVLVRILFENLKNLLPENHIHLISSFDGLSIINSLELNQPSLFLDNIKFIYDN</sequence>
<accession>Q54KF6</accession>
<keyword id="KW-0325">Glycoprotein</keyword>
<keyword id="KW-0326">Glycosidase</keyword>
<keyword id="KW-0378">Hydrolase</keyword>
<keyword id="KW-1185">Reference proteome</keyword>
<keyword id="KW-0732">Signal</keyword>
<comment type="similarity">
    <text evidence="3">Belongs to the CEMIP family.</text>
</comment>
<protein>
    <recommendedName>
        <fullName>Protein DDB_G0287365</fullName>
    </recommendedName>
</protein>
<name>Y7365_DICDI</name>
<organism>
    <name type="scientific">Dictyostelium discoideum</name>
    <name type="common">Social amoeba</name>
    <dbReference type="NCBI Taxonomy" id="44689"/>
    <lineage>
        <taxon>Eukaryota</taxon>
        <taxon>Amoebozoa</taxon>
        <taxon>Evosea</taxon>
        <taxon>Eumycetozoa</taxon>
        <taxon>Dictyostelia</taxon>
        <taxon>Dictyosteliales</taxon>
        <taxon>Dictyosteliaceae</taxon>
        <taxon>Dictyostelium</taxon>
    </lineage>
</organism>
<feature type="signal peptide" evidence="1">
    <location>
        <begin position="1"/>
        <end position="24"/>
    </location>
</feature>
<feature type="chain" id="PRO_0000384451" description="Protein DDB_G0287365">
    <location>
        <begin position="25"/>
        <end position="1099"/>
    </location>
</feature>
<feature type="domain" description="G8" evidence="2">
    <location>
        <begin position="47"/>
        <end position="174"/>
    </location>
</feature>
<feature type="glycosylation site" description="N-linked (GlcNAc...) asparagine" evidence="1">
    <location>
        <position position="62"/>
    </location>
</feature>
<feature type="glycosylation site" description="N-linked (GlcNAc...) asparagine" evidence="1">
    <location>
        <position position="137"/>
    </location>
</feature>
<feature type="glycosylation site" description="N-linked (GlcNAc...) asparagine" evidence="1">
    <location>
        <position position="664"/>
    </location>
</feature>
<feature type="glycosylation site" description="N-linked (GlcNAc...) asparagine" evidence="1">
    <location>
        <position position="764"/>
    </location>
</feature>
<feature type="glycosylation site" description="N-linked (GlcNAc...) asparagine" evidence="1">
    <location>
        <position position="858"/>
    </location>
</feature>